<name>SAV1_MOUSE</name>
<protein>
    <recommendedName>
        <fullName>Protein salvador homolog 1</fullName>
    </recommendedName>
    <alternativeName>
        <fullName>45 kDa WW domain protein</fullName>
        <shortName>mWW45</shortName>
    </alternativeName>
</protein>
<sequence length="386" mass="44845">MLSRKKTKNEVSKPAEVQGKYVKKETSPLLRNLMPSFIRHGPTIPRRTDLCLPDSSATAFSASGDGVVSRNQSFLRTAIQRTPHEVMRRESHRLSAPSYLVRSLADVPRECGSSQSFLTEVNFAVENGDSGSRYFFSDNFFDGQRRRPLGDRAQEDYRYYEYNHDLFQRMPQSQGRHTSGIGRVTATSLGNLTNHGSEDLPLPPGWSVDWTMRGRKYYIDHNTNTTHWSHPLEREGLPPGWERVESSEFGTYYVDHTNKRAQYRHPCAPSVPRYDQPPPITYQPQQTERNQSLLVPANPYHTAEIPDWLQVYARAPVKYDHILKWELFQLADLDTYQGMLKLLFMKELEQIVKLYEAYRQALLTELENRKQRQQWYAQQHGKTFLS</sequence>
<keyword id="KW-0002">3D-structure</keyword>
<keyword id="KW-0175">Coiled coil</keyword>
<keyword id="KW-0963">Cytoplasm</keyword>
<keyword id="KW-0539">Nucleus</keyword>
<keyword id="KW-0597">Phosphoprotein</keyword>
<keyword id="KW-1185">Reference proteome</keyword>
<keyword id="KW-0677">Repeat</keyword>
<proteinExistence type="evidence at protein level"/>
<comment type="function">
    <text evidence="1 6 7">Regulator of STK3/MST2 and STK4/MST1 in the Hippo signaling pathway which plays a pivotal role in organ size control and tumor suppression by restricting proliferation and promoting apoptosis. The core of this pathway is composed of a kinase cascade wherein STK3/MST2 and STK4/MST1, in complex with its regulatory protein SAV1, phosphorylates and activates LATS1/2 in complex with its regulatory protein MOB1, which in turn phosphorylates and inactivates YAP1 oncoprotein and WWTR1/TAZ. Phosphorylation of YAP1 by LATS1/2 inhibits its translocation into the nucleus to regulate cellular genes important for cell proliferation, cell death, and cell migration. SAV1 is required for STK3/MST2 and STK4/MST1 activation and promotes cell-cycle exit and terminal differentiation in developing epithelial tissues. Plays a role in centrosome disjunction by regulating the localization of NEK2 to centrosomes, and its ability to phosphorylate CROCC and CEP250. In conjunction with STK3/MST2, activates the transcriptional activity of ESR1 through the modulation of its phosphorylation (By similarity).</text>
</comment>
<comment type="subunit">
    <text evidence="2">Homodimer. Stabilized through interaction with STK3/MST2 or STK4/MST1. Interacts (via SARAH domain) with isoform 1 of NEK2. Interacts with ESR1 only in the presence of STK3/MST2. Interacts with WTIP and AJUBA.</text>
</comment>
<comment type="subcellular location">
    <subcellularLocation>
        <location evidence="1">Nucleus</location>
    </subcellularLocation>
    <subcellularLocation>
        <location evidence="1">Cytoplasm</location>
    </subcellularLocation>
</comment>
<comment type="tissue specificity">
    <text>Ubiquitously expressed in adult tissues with the highest level found in testis.</text>
</comment>
<comment type="developmental stage">
    <text>Expression was detected in 7 dpc embryos. Expression levels decreased at day 11 and remained low at days 15 and 17.</text>
</comment>
<comment type="PTM">
    <text evidence="1">Phosphorylated by STK3/MST2 and STK4/MST1. Phosphorylation is not required for SAV1 stability and may increase the number of protein binding sites on the scaffold molecule (By similarity).</text>
</comment>
<comment type="disruption phenotype">
    <text evidence="6 7">Mice show progressive hepatomegaly with a 2-fold increase in liver mass relative to total body mass at 1 month of age and a 3-fold increase by 3 months of age. Embryos display unchecked proliferation and defects in terminal differentiation of epithelial cells.</text>
</comment>
<organism>
    <name type="scientific">Mus musculus</name>
    <name type="common">Mouse</name>
    <dbReference type="NCBI Taxonomy" id="10090"/>
    <lineage>
        <taxon>Eukaryota</taxon>
        <taxon>Metazoa</taxon>
        <taxon>Chordata</taxon>
        <taxon>Craniata</taxon>
        <taxon>Vertebrata</taxon>
        <taxon>Euteleostomi</taxon>
        <taxon>Mammalia</taxon>
        <taxon>Eutheria</taxon>
        <taxon>Euarchontoglires</taxon>
        <taxon>Glires</taxon>
        <taxon>Rodentia</taxon>
        <taxon>Myomorpha</taxon>
        <taxon>Muroidea</taxon>
        <taxon>Muridae</taxon>
        <taxon>Murinae</taxon>
        <taxon>Mus</taxon>
        <taxon>Mus</taxon>
    </lineage>
</organism>
<feature type="chain" id="PRO_0000076061" description="Protein salvador homolog 1">
    <location>
        <begin position="1"/>
        <end position="386"/>
    </location>
</feature>
<feature type="domain" description="WW 1" evidence="4">
    <location>
        <begin position="200"/>
        <end position="233"/>
    </location>
</feature>
<feature type="domain" description="WW 2" evidence="4">
    <location>
        <begin position="235"/>
        <end position="268"/>
    </location>
</feature>
<feature type="domain" description="SARAH" evidence="5">
    <location>
        <begin position="322"/>
        <end position="369"/>
    </location>
</feature>
<feature type="coiled-coil region" evidence="3">
    <location>
        <begin position="345"/>
        <end position="374"/>
    </location>
</feature>
<feature type="modified residue" description="Phosphoserine" evidence="2">
    <location>
        <position position="95"/>
    </location>
</feature>
<feature type="modified residue" description="Phosphoserine" evidence="9">
    <location>
        <position position="137"/>
    </location>
</feature>
<feature type="modified residue" description="Phosphothreonine" evidence="2">
    <location>
        <position position="211"/>
    </location>
</feature>
<feature type="sequence conflict" description="In Ref. 2; AAH19377." evidence="8" ref="2">
    <original>V</original>
    <variation>I</variation>
    <location>
        <position position="67"/>
    </location>
</feature>
<feature type="strand" evidence="11">
    <location>
        <begin position="206"/>
        <end position="210"/>
    </location>
</feature>
<feature type="strand" evidence="10">
    <location>
        <begin position="212"/>
        <end position="214"/>
    </location>
</feature>
<feature type="strand" evidence="11">
    <location>
        <begin position="216"/>
        <end position="220"/>
    </location>
</feature>
<feature type="turn" evidence="11">
    <location>
        <begin position="221"/>
        <end position="224"/>
    </location>
</feature>
<feature type="strand" evidence="11">
    <location>
        <begin position="225"/>
        <end position="229"/>
    </location>
</feature>
<feature type="turn" evidence="10">
    <location>
        <begin position="231"/>
        <end position="233"/>
    </location>
</feature>
<feature type="strand" evidence="11">
    <location>
        <begin position="241"/>
        <end position="246"/>
    </location>
</feature>
<feature type="turn" evidence="11">
    <location>
        <begin position="247"/>
        <end position="249"/>
    </location>
</feature>
<feature type="strand" evidence="11">
    <location>
        <begin position="250"/>
        <end position="255"/>
    </location>
</feature>
<feature type="turn" evidence="11">
    <location>
        <begin position="256"/>
        <end position="259"/>
    </location>
</feature>
<feature type="strand" evidence="11">
    <location>
        <begin position="260"/>
        <end position="264"/>
    </location>
</feature>
<evidence type="ECO:0000250" key="1"/>
<evidence type="ECO:0000250" key="2">
    <source>
        <dbReference type="UniProtKB" id="Q9H4B6"/>
    </source>
</evidence>
<evidence type="ECO:0000255" key="3"/>
<evidence type="ECO:0000255" key="4">
    <source>
        <dbReference type="PROSITE-ProRule" id="PRU00224"/>
    </source>
</evidence>
<evidence type="ECO:0000255" key="5">
    <source>
        <dbReference type="PROSITE-ProRule" id="PRU00310"/>
    </source>
</evidence>
<evidence type="ECO:0000269" key="6">
    <source>
    </source>
</evidence>
<evidence type="ECO:0000269" key="7">
    <source>
    </source>
</evidence>
<evidence type="ECO:0000305" key="8"/>
<evidence type="ECO:0007744" key="9">
    <source>
    </source>
</evidence>
<evidence type="ECO:0007829" key="10">
    <source>
        <dbReference type="PDB" id="2YSB"/>
    </source>
</evidence>
<evidence type="ECO:0007829" key="11">
    <source>
        <dbReference type="PDB" id="7BQG"/>
    </source>
</evidence>
<gene>
    <name type="primary">Sav1</name>
    <name type="synonym">Ww45</name>
    <name type="synonym">Wwp3</name>
</gene>
<accession>Q8VEB2</accession>
<accession>Q9D9N9</accession>
<accession>Q9ER46</accession>
<reference key="1">
    <citation type="journal article" date="2000" name="Biochem. Biophys. Res. Commun.">
        <title>Cloning, expression and mapping of hWW45, a novel WW-domain containing gene.</title>
        <authorList>
            <person name="Valverde P."/>
        </authorList>
    </citation>
    <scope>NUCLEOTIDE SEQUENCE [MRNA]</scope>
</reference>
<reference key="2">
    <citation type="journal article" date="2004" name="Genome Res.">
        <title>The status, quality, and expansion of the NIH full-length cDNA project: the Mammalian Gene Collection (MGC).</title>
        <authorList>
            <consortium name="The MGC Project Team"/>
        </authorList>
    </citation>
    <scope>NUCLEOTIDE SEQUENCE [LARGE SCALE MRNA]</scope>
    <source>
        <strain>Czech II</strain>
        <tissue>Mammary gland</tissue>
    </source>
</reference>
<reference key="3">
    <citation type="journal article" date="2005" name="Science">
        <title>The transcriptional landscape of the mammalian genome.</title>
        <authorList>
            <person name="Carninci P."/>
            <person name="Kasukawa T."/>
            <person name="Katayama S."/>
            <person name="Gough J."/>
            <person name="Frith M.C."/>
            <person name="Maeda N."/>
            <person name="Oyama R."/>
            <person name="Ravasi T."/>
            <person name="Lenhard B."/>
            <person name="Wells C."/>
            <person name="Kodzius R."/>
            <person name="Shimokawa K."/>
            <person name="Bajic V.B."/>
            <person name="Brenner S.E."/>
            <person name="Batalov S."/>
            <person name="Forrest A.R."/>
            <person name="Zavolan M."/>
            <person name="Davis M.J."/>
            <person name="Wilming L.G."/>
            <person name="Aidinis V."/>
            <person name="Allen J.E."/>
            <person name="Ambesi-Impiombato A."/>
            <person name="Apweiler R."/>
            <person name="Aturaliya R.N."/>
            <person name="Bailey T.L."/>
            <person name="Bansal M."/>
            <person name="Baxter L."/>
            <person name="Beisel K.W."/>
            <person name="Bersano T."/>
            <person name="Bono H."/>
            <person name="Chalk A.M."/>
            <person name="Chiu K.P."/>
            <person name="Choudhary V."/>
            <person name="Christoffels A."/>
            <person name="Clutterbuck D.R."/>
            <person name="Crowe M.L."/>
            <person name="Dalla E."/>
            <person name="Dalrymple B.P."/>
            <person name="de Bono B."/>
            <person name="Della Gatta G."/>
            <person name="di Bernardo D."/>
            <person name="Down T."/>
            <person name="Engstrom P."/>
            <person name="Fagiolini M."/>
            <person name="Faulkner G."/>
            <person name="Fletcher C.F."/>
            <person name="Fukushima T."/>
            <person name="Furuno M."/>
            <person name="Futaki S."/>
            <person name="Gariboldi M."/>
            <person name="Georgii-Hemming P."/>
            <person name="Gingeras T.R."/>
            <person name="Gojobori T."/>
            <person name="Green R.E."/>
            <person name="Gustincich S."/>
            <person name="Harbers M."/>
            <person name="Hayashi Y."/>
            <person name="Hensch T.K."/>
            <person name="Hirokawa N."/>
            <person name="Hill D."/>
            <person name="Huminiecki L."/>
            <person name="Iacono M."/>
            <person name="Ikeo K."/>
            <person name="Iwama A."/>
            <person name="Ishikawa T."/>
            <person name="Jakt M."/>
            <person name="Kanapin A."/>
            <person name="Katoh M."/>
            <person name="Kawasawa Y."/>
            <person name="Kelso J."/>
            <person name="Kitamura H."/>
            <person name="Kitano H."/>
            <person name="Kollias G."/>
            <person name="Krishnan S.P."/>
            <person name="Kruger A."/>
            <person name="Kummerfeld S.K."/>
            <person name="Kurochkin I.V."/>
            <person name="Lareau L.F."/>
            <person name="Lazarevic D."/>
            <person name="Lipovich L."/>
            <person name="Liu J."/>
            <person name="Liuni S."/>
            <person name="McWilliam S."/>
            <person name="Madan Babu M."/>
            <person name="Madera M."/>
            <person name="Marchionni L."/>
            <person name="Matsuda H."/>
            <person name="Matsuzawa S."/>
            <person name="Miki H."/>
            <person name="Mignone F."/>
            <person name="Miyake S."/>
            <person name="Morris K."/>
            <person name="Mottagui-Tabar S."/>
            <person name="Mulder N."/>
            <person name="Nakano N."/>
            <person name="Nakauchi H."/>
            <person name="Ng P."/>
            <person name="Nilsson R."/>
            <person name="Nishiguchi S."/>
            <person name="Nishikawa S."/>
            <person name="Nori F."/>
            <person name="Ohara O."/>
            <person name="Okazaki Y."/>
            <person name="Orlando V."/>
            <person name="Pang K.C."/>
            <person name="Pavan W.J."/>
            <person name="Pavesi G."/>
            <person name="Pesole G."/>
            <person name="Petrovsky N."/>
            <person name="Piazza S."/>
            <person name="Reed J."/>
            <person name="Reid J.F."/>
            <person name="Ring B.Z."/>
            <person name="Ringwald M."/>
            <person name="Rost B."/>
            <person name="Ruan Y."/>
            <person name="Salzberg S.L."/>
            <person name="Sandelin A."/>
            <person name="Schneider C."/>
            <person name="Schoenbach C."/>
            <person name="Sekiguchi K."/>
            <person name="Semple C.A."/>
            <person name="Seno S."/>
            <person name="Sessa L."/>
            <person name="Sheng Y."/>
            <person name="Shibata Y."/>
            <person name="Shimada H."/>
            <person name="Shimada K."/>
            <person name="Silva D."/>
            <person name="Sinclair B."/>
            <person name="Sperling S."/>
            <person name="Stupka E."/>
            <person name="Sugiura K."/>
            <person name="Sultana R."/>
            <person name="Takenaka Y."/>
            <person name="Taki K."/>
            <person name="Tammoja K."/>
            <person name="Tan S.L."/>
            <person name="Tang S."/>
            <person name="Taylor M.S."/>
            <person name="Tegner J."/>
            <person name="Teichmann S.A."/>
            <person name="Ueda H.R."/>
            <person name="van Nimwegen E."/>
            <person name="Verardo R."/>
            <person name="Wei C.L."/>
            <person name="Yagi K."/>
            <person name="Yamanishi H."/>
            <person name="Zabarovsky E."/>
            <person name="Zhu S."/>
            <person name="Zimmer A."/>
            <person name="Hide W."/>
            <person name="Bult C."/>
            <person name="Grimmond S.M."/>
            <person name="Teasdale R.D."/>
            <person name="Liu E.T."/>
            <person name="Brusic V."/>
            <person name="Quackenbush J."/>
            <person name="Wahlestedt C."/>
            <person name="Mattick J.S."/>
            <person name="Hume D.A."/>
            <person name="Kai C."/>
            <person name="Sasaki D."/>
            <person name="Tomaru Y."/>
            <person name="Fukuda S."/>
            <person name="Kanamori-Katayama M."/>
            <person name="Suzuki M."/>
            <person name="Aoki J."/>
            <person name="Arakawa T."/>
            <person name="Iida J."/>
            <person name="Imamura K."/>
            <person name="Itoh M."/>
            <person name="Kato T."/>
            <person name="Kawaji H."/>
            <person name="Kawagashira N."/>
            <person name="Kawashima T."/>
            <person name="Kojima M."/>
            <person name="Kondo S."/>
            <person name="Konno H."/>
            <person name="Nakano K."/>
            <person name="Ninomiya N."/>
            <person name="Nishio T."/>
            <person name="Okada M."/>
            <person name="Plessy C."/>
            <person name="Shibata K."/>
            <person name="Shiraki T."/>
            <person name="Suzuki S."/>
            <person name="Tagami M."/>
            <person name="Waki K."/>
            <person name="Watahiki A."/>
            <person name="Okamura-Oho Y."/>
            <person name="Suzuki H."/>
            <person name="Kawai J."/>
            <person name="Hayashizaki Y."/>
        </authorList>
    </citation>
    <scope>NUCLEOTIDE SEQUENCE [LARGE SCALE MRNA] OF 111-386</scope>
    <source>
        <strain>C57BL/6J</strain>
        <tissue>Testis</tissue>
    </source>
</reference>
<reference key="4">
    <citation type="journal article" date="2008" name="EMBO J.">
        <title>A crucial role of WW45 in developing epithelial tissues in the mouse.</title>
        <authorList>
            <person name="Lee J.H."/>
            <person name="Kim T.S."/>
            <person name="Yang T.H."/>
            <person name="Koo B.K."/>
            <person name="Oh S.P."/>
            <person name="Lee K.P."/>
            <person name="Oh H.J."/>
            <person name="Lee S.H."/>
            <person name="Kong Y.Y."/>
            <person name="Kim J.M."/>
            <person name="Lim D.S."/>
        </authorList>
    </citation>
    <scope>FUNCTION</scope>
    <scope>DISRUPTION PHENOTYPE</scope>
</reference>
<reference key="5">
    <citation type="journal article" date="2010" name="Cell">
        <title>A tissue-specific atlas of mouse protein phosphorylation and expression.</title>
        <authorList>
            <person name="Huttlin E.L."/>
            <person name="Jedrychowski M.P."/>
            <person name="Elias J.E."/>
            <person name="Goswami T."/>
            <person name="Rad R."/>
            <person name="Beausoleil S.A."/>
            <person name="Villen J."/>
            <person name="Haas W."/>
            <person name="Sowa M.E."/>
            <person name="Gygi S.P."/>
        </authorList>
    </citation>
    <scope>PHOSPHORYLATION [LARGE SCALE ANALYSIS] AT SER-137</scope>
    <scope>IDENTIFICATION BY MASS SPECTROMETRY [LARGE SCALE ANALYSIS]</scope>
    <source>
        <tissue>Kidney</tissue>
        <tissue>Lung</tissue>
        <tissue>Spleen</tissue>
    </source>
</reference>
<reference key="6">
    <citation type="journal article" date="2010" name="Proc. Natl. Acad. Sci. U.S.A.">
        <title>Hippo signaling is a potent in vivo growth and tumor suppressor pathway in the mammalian liver.</title>
        <authorList>
            <person name="Lu L."/>
            <person name="Li Y."/>
            <person name="Kim S.M."/>
            <person name="Bossuyt W."/>
            <person name="Liu P."/>
            <person name="Qiu Q."/>
            <person name="Wang Y."/>
            <person name="Halder G."/>
            <person name="Finegold M.J."/>
            <person name="Lee J.S."/>
            <person name="Johnson R.L."/>
        </authorList>
    </citation>
    <scope>FUNCTION</scope>
    <scope>DISRUPTION PHENOTYPE</scope>
</reference>
<reference key="7">
    <citation type="submission" date="2007-10" db="PDB data bank">
        <title>Solution structure of the first WW domain from the mouse salvador homolog 1 protein (Sav1).</title>
        <authorList>
            <consortium name="RIKEN structural genomics initiative (RSGI)"/>
        </authorList>
    </citation>
    <scope>STRUCTURE BY NMR OF 198-233</scope>
</reference>
<dbReference type="EMBL" id="AJ292968">
    <property type="protein sequence ID" value="CAC13977.1"/>
    <property type="molecule type" value="mRNA"/>
</dbReference>
<dbReference type="EMBL" id="BC019377">
    <property type="protein sequence ID" value="AAH19377.1"/>
    <property type="molecule type" value="mRNA"/>
</dbReference>
<dbReference type="EMBL" id="AK006655">
    <property type="protein sequence ID" value="BAB24691.2"/>
    <property type="molecule type" value="mRNA"/>
</dbReference>
<dbReference type="CCDS" id="CCDS25956.1"/>
<dbReference type="PIR" id="JC7508">
    <property type="entry name" value="JC7508"/>
</dbReference>
<dbReference type="RefSeq" id="NP_071311.1">
    <property type="nucleotide sequence ID" value="NM_022028.3"/>
</dbReference>
<dbReference type="PDB" id="2DWV">
    <property type="method" value="NMR"/>
    <property type="chains" value="A/B=231-266"/>
</dbReference>
<dbReference type="PDB" id="2YSB">
    <property type="method" value="NMR"/>
    <property type="chains" value="A=198-233"/>
</dbReference>
<dbReference type="PDB" id="7BQF">
    <property type="method" value="X-ray"/>
    <property type="resolution" value="1.70 A"/>
    <property type="chains" value="A=196-285"/>
</dbReference>
<dbReference type="PDB" id="7BQG">
    <property type="method" value="X-ray"/>
    <property type="resolution" value="1.55 A"/>
    <property type="chains" value="A=196-272"/>
</dbReference>
<dbReference type="PDBsum" id="2DWV"/>
<dbReference type="PDBsum" id="2YSB"/>
<dbReference type="PDBsum" id="7BQF"/>
<dbReference type="PDBsum" id="7BQG"/>
<dbReference type="SMR" id="Q8VEB2"/>
<dbReference type="BioGRID" id="211016">
    <property type="interactions" value="2"/>
</dbReference>
<dbReference type="FunCoup" id="Q8VEB2">
    <property type="interactions" value="3248"/>
</dbReference>
<dbReference type="IntAct" id="Q8VEB2">
    <property type="interactions" value="4"/>
</dbReference>
<dbReference type="MINT" id="Q8VEB2"/>
<dbReference type="STRING" id="10090.ENSMUSP00000021467"/>
<dbReference type="iPTMnet" id="Q8VEB2"/>
<dbReference type="PhosphoSitePlus" id="Q8VEB2"/>
<dbReference type="PaxDb" id="10090-ENSMUSP00000021467"/>
<dbReference type="ProteomicsDB" id="256707"/>
<dbReference type="Pumba" id="Q8VEB2"/>
<dbReference type="Antibodypedia" id="23683">
    <property type="antibodies" value="253 antibodies from 28 providers"/>
</dbReference>
<dbReference type="DNASU" id="64010"/>
<dbReference type="Ensembl" id="ENSMUST00000021467.8">
    <property type="protein sequence ID" value="ENSMUSP00000021467.8"/>
    <property type="gene ID" value="ENSMUSG00000021067.9"/>
</dbReference>
<dbReference type="GeneID" id="64010"/>
<dbReference type="KEGG" id="mmu:64010"/>
<dbReference type="UCSC" id="uc007nte.2">
    <property type="organism name" value="mouse"/>
</dbReference>
<dbReference type="AGR" id="MGI:1927144"/>
<dbReference type="CTD" id="60485"/>
<dbReference type="MGI" id="MGI:1927144">
    <property type="gene designation" value="Sav1"/>
</dbReference>
<dbReference type="VEuPathDB" id="HostDB:ENSMUSG00000021067"/>
<dbReference type="eggNOG" id="KOG1891">
    <property type="taxonomic scope" value="Eukaryota"/>
</dbReference>
<dbReference type="GeneTree" id="ENSGT00940000156106"/>
<dbReference type="HOGENOM" id="CLU_060422_0_0_1"/>
<dbReference type="InParanoid" id="Q8VEB2"/>
<dbReference type="OMA" id="AARYYYP"/>
<dbReference type="OrthoDB" id="5339429at2759"/>
<dbReference type="PhylomeDB" id="Q8VEB2"/>
<dbReference type="TreeFam" id="TF317631"/>
<dbReference type="Reactome" id="R-MMU-2028269">
    <property type="pathway name" value="Signaling by Hippo"/>
</dbReference>
<dbReference type="BioGRID-ORCS" id="64010">
    <property type="hits" value="0 hits in 78 CRISPR screens"/>
</dbReference>
<dbReference type="ChiTaRS" id="Sav1">
    <property type="organism name" value="mouse"/>
</dbReference>
<dbReference type="EvolutionaryTrace" id="Q8VEB2"/>
<dbReference type="PRO" id="PR:Q8VEB2"/>
<dbReference type="Proteomes" id="UP000000589">
    <property type="component" value="Chromosome 12"/>
</dbReference>
<dbReference type="RNAct" id="Q8VEB2">
    <property type="molecule type" value="protein"/>
</dbReference>
<dbReference type="Bgee" id="ENSMUSG00000021067">
    <property type="expression patterns" value="Expressed in gastrula and 245 other cell types or tissues"/>
</dbReference>
<dbReference type="GO" id="GO:0005737">
    <property type="term" value="C:cytoplasm"/>
    <property type="evidence" value="ECO:0000250"/>
    <property type="project" value="UniProtKB"/>
</dbReference>
<dbReference type="GO" id="GO:0005829">
    <property type="term" value="C:cytosol"/>
    <property type="evidence" value="ECO:0007669"/>
    <property type="project" value="Ensembl"/>
</dbReference>
<dbReference type="GO" id="GO:0005634">
    <property type="term" value="C:nucleus"/>
    <property type="evidence" value="ECO:0000250"/>
    <property type="project" value="UniProtKB"/>
</dbReference>
<dbReference type="GO" id="GO:0042802">
    <property type="term" value="F:identical protein binding"/>
    <property type="evidence" value="ECO:0007669"/>
    <property type="project" value="Ensembl"/>
</dbReference>
<dbReference type="GO" id="GO:0060090">
    <property type="term" value="F:molecular adaptor activity"/>
    <property type="evidence" value="ECO:0007669"/>
    <property type="project" value="InterPro"/>
</dbReference>
<dbReference type="GO" id="GO:0043539">
    <property type="term" value="F:protein serine/threonine kinase activator activity"/>
    <property type="evidence" value="ECO:0007669"/>
    <property type="project" value="Ensembl"/>
</dbReference>
<dbReference type="GO" id="GO:0140537">
    <property type="term" value="F:transcription regulator activator activity"/>
    <property type="evidence" value="ECO:0000266"/>
    <property type="project" value="MGI"/>
</dbReference>
<dbReference type="GO" id="GO:0060038">
    <property type="term" value="P:cardiac muscle cell proliferation"/>
    <property type="evidence" value="ECO:0000315"/>
    <property type="project" value="MGI"/>
</dbReference>
<dbReference type="GO" id="GO:0050673">
    <property type="term" value="P:epithelial cell proliferation"/>
    <property type="evidence" value="ECO:0000315"/>
    <property type="project" value="MGI"/>
</dbReference>
<dbReference type="GO" id="GO:0001942">
    <property type="term" value="P:hair follicle development"/>
    <property type="evidence" value="ECO:0000315"/>
    <property type="project" value="MGI"/>
</dbReference>
<dbReference type="GO" id="GO:0035329">
    <property type="term" value="P:hippo signaling"/>
    <property type="evidence" value="ECO:0000315"/>
    <property type="project" value="UniProtKB"/>
</dbReference>
<dbReference type="GO" id="GO:0060575">
    <property type="term" value="P:intestinal epithelial cell differentiation"/>
    <property type="evidence" value="ECO:0000315"/>
    <property type="project" value="MGI"/>
</dbReference>
<dbReference type="GO" id="GO:0097283">
    <property type="term" value="P:keratinocyte apoptotic process"/>
    <property type="evidence" value="ECO:0000315"/>
    <property type="project" value="MGI"/>
</dbReference>
<dbReference type="GO" id="GO:0030216">
    <property type="term" value="P:keratinocyte differentiation"/>
    <property type="evidence" value="ECO:0000315"/>
    <property type="project" value="MGI"/>
</dbReference>
<dbReference type="GO" id="GO:0060487">
    <property type="term" value="P:lung epithelial cell differentiation"/>
    <property type="evidence" value="ECO:0000315"/>
    <property type="project" value="MGI"/>
</dbReference>
<dbReference type="GO" id="GO:0060044">
    <property type="term" value="P:negative regulation of cardiac muscle cell proliferation"/>
    <property type="evidence" value="ECO:0000315"/>
    <property type="project" value="MGI"/>
</dbReference>
<dbReference type="GO" id="GO:0050680">
    <property type="term" value="P:negative regulation of epithelial cell proliferation"/>
    <property type="evidence" value="ECO:0000315"/>
    <property type="project" value="MGI"/>
</dbReference>
<dbReference type="GO" id="GO:0045600">
    <property type="term" value="P:positive regulation of fat cell differentiation"/>
    <property type="evidence" value="ECO:0000316"/>
    <property type="project" value="MGI"/>
</dbReference>
<dbReference type="GO" id="GO:1902174">
    <property type="term" value="P:positive regulation of keratinocyte apoptotic process"/>
    <property type="evidence" value="ECO:0000315"/>
    <property type="project" value="MGI"/>
</dbReference>
<dbReference type="GO" id="GO:0050821">
    <property type="term" value="P:protein stabilization"/>
    <property type="evidence" value="ECO:0000266"/>
    <property type="project" value="MGI"/>
</dbReference>
<dbReference type="GO" id="GO:0046620">
    <property type="term" value="P:regulation of organ growth"/>
    <property type="evidence" value="ECO:0000315"/>
    <property type="project" value="MGI"/>
</dbReference>
<dbReference type="GO" id="GO:2000036">
    <property type="term" value="P:regulation of stem cell population maintenance"/>
    <property type="evidence" value="ECO:0000315"/>
    <property type="project" value="MGI"/>
</dbReference>
<dbReference type="GO" id="GO:0060412">
    <property type="term" value="P:ventricular septum morphogenesis"/>
    <property type="evidence" value="ECO:0000315"/>
    <property type="project" value="MGI"/>
</dbReference>
<dbReference type="CDD" id="cd21433">
    <property type="entry name" value="SARAH_Sav"/>
    <property type="match status" value="1"/>
</dbReference>
<dbReference type="CDD" id="cd00201">
    <property type="entry name" value="WW"/>
    <property type="match status" value="2"/>
</dbReference>
<dbReference type="FunFam" id="2.20.70.10:FF:000030">
    <property type="entry name" value="Salvador family WW domain-containing protein 1"/>
    <property type="match status" value="1"/>
</dbReference>
<dbReference type="FunFam" id="2.20.70.10:FF:000035">
    <property type="entry name" value="Salvador homolog 1 (Drosophila)"/>
    <property type="match status" value="1"/>
</dbReference>
<dbReference type="Gene3D" id="2.20.70.10">
    <property type="match status" value="2"/>
</dbReference>
<dbReference type="InterPro" id="IPR011524">
    <property type="entry name" value="SARAH_dom"/>
</dbReference>
<dbReference type="InterPro" id="IPR030030">
    <property type="entry name" value="Sav"/>
</dbReference>
<dbReference type="InterPro" id="IPR001202">
    <property type="entry name" value="WW_dom"/>
</dbReference>
<dbReference type="InterPro" id="IPR036020">
    <property type="entry name" value="WW_dom_sf"/>
</dbReference>
<dbReference type="PANTHER" id="PTHR47522:SF2">
    <property type="entry name" value="PROTEIN SALVADOR HOMOLOG 1"/>
    <property type="match status" value="1"/>
</dbReference>
<dbReference type="PANTHER" id="PTHR47522">
    <property type="entry name" value="SALVADOR FAMILY WW DOMAIN-CONTAINING PROTEIN 1"/>
    <property type="match status" value="1"/>
</dbReference>
<dbReference type="Pfam" id="PF00397">
    <property type="entry name" value="WW"/>
    <property type="match status" value="1"/>
</dbReference>
<dbReference type="SMART" id="SM00456">
    <property type="entry name" value="WW"/>
    <property type="match status" value="2"/>
</dbReference>
<dbReference type="SUPFAM" id="SSF51045">
    <property type="entry name" value="WW domain"/>
    <property type="match status" value="2"/>
</dbReference>
<dbReference type="PROSITE" id="PS50951">
    <property type="entry name" value="SARAH"/>
    <property type="match status" value="1"/>
</dbReference>
<dbReference type="PROSITE" id="PS50020">
    <property type="entry name" value="WW_DOMAIN_2"/>
    <property type="match status" value="2"/>
</dbReference>